<evidence type="ECO:0000255" key="1">
    <source>
        <dbReference type="HAMAP-Rule" id="MF_01014"/>
    </source>
</evidence>
<proteinExistence type="inferred from homology"/>
<accession>Q1H4R3</accession>
<comment type="catalytic activity">
    <reaction evidence="1">
        <text>1-(5-phospho-beta-D-ribosyl)-5-[(5-phospho-beta-D-ribosylamino)methylideneamino]imidazole-4-carboxamide = 5-[(5-phospho-1-deoxy-D-ribulos-1-ylimino)methylamino]-1-(5-phospho-beta-D-ribosyl)imidazole-4-carboxamide</text>
        <dbReference type="Rhea" id="RHEA:15469"/>
        <dbReference type="ChEBI" id="CHEBI:58435"/>
        <dbReference type="ChEBI" id="CHEBI:58525"/>
        <dbReference type="EC" id="5.3.1.16"/>
    </reaction>
</comment>
<comment type="pathway">
    <text evidence="1">Amino-acid biosynthesis; L-histidine biosynthesis; L-histidine from 5-phospho-alpha-D-ribose 1-diphosphate: step 4/9.</text>
</comment>
<comment type="subcellular location">
    <subcellularLocation>
        <location evidence="1">Cytoplasm</location>
    </subcellularLocation>
</comment>
<comment type="similarity">
    <text evidence="1">Belongs to the HisA/HisF family.</text>
</comment>
<dbReference type="EC" id="5.3.1.16" evidence="1"/>
<dbReference type="EMBL" id="CP000284">
    <property type="protein sequence ID" value="ABE48524.1"/>
    <property type="molecule type" value="Genomic_DNA"/>
</dbReference>
<dbReference type="RefSeq" id="WP_011478621.1">
    <property type="nucleotide sequence ID" value="NC_007947.1"/>
</dbReference>
<dbReference type="SMR" id="Q1H4R3"/>
<dbReference type="STRING" id="265072.Mfla_0253"/>
<dbReference type="KEGG" id="mfa:Mfla_0253"/>
<dbReference type="eggNOG" id="COG0106">
    <property type="taxonomic scope" value="Bacteria"/>
</dbReference>
<dbReference type="HOGENOM" id="CLU_048577_1_1_4"/>
<dbReference type="OrthoDB" id="9807749at2"/>
<dbReference type="UniPathway" id="UPA00031">
    <property type="reaction ID" value="UER00009"/>
</dbReference>
<dbReference type="Proteomes" id="UP000002440">
    <property type="component" value="Chromosome"/>
</dbReference>
<dbReference type="GO" id="GO:0005737">
    <property type="term" value="C:cytoplasm"/>
    <property type="evidence" value="ECO:0007669"/>
    <property type="project" value="UniProtKB-SubCell"/>
</dbReference>
<dbReference type="GO" id="GO:0003949">
    <property type="term" value="F:1-(5-phosphoribosyl)-5-[(5-phosphoribosylamino)methylideneamino]imidazole-4-carboxamide isomerase activity"/>
    <property type="evidence" value="ECO:0007669"/>
    <property type="project" value="UniProtKB-UniRule"/>
</dbReference>
<dbReference type="GO" id="GO:0000105">
    <property type="term" value="P:L-histidine biosynthetic process"/>
    <property type="evidence" value="ECO:0007669"/>
    <property type="project" value="UniProtKB-UniRule"/>
</dbReference>
<dbReference type="GO" id="GO:0000162">
    <property type="term" value="P:L-tryptophan biosynthetic process"/>
    <property type="evidence" value="ECO:0007669"/>
    <property type="project" value="TreeGrafter"/>
</dbReference>
<dbReference type="CDD" id="cd04732">
    <property type="entry name" value="HisA"/>
    <property type="match status" value="1"/>
</dbReference>
<dbReference type="FunFam" id="3.20.20.70:FF:000009">
    <property type="entry name" value="1-(5-phosphoribosyl)-5-[(5-phosphoribosylamino)methylideneamino] imidazole-4-carboxamide isomerase"/>
    <property type="match status" value="1"/>
</dbReference>
<dbReference type="Gene3D" id="3.20.20.70">
    <property type="entry name" value="Aldolase class I"/>
    <property type="match status" value="1"/>
</dbReference>
<dbReference type="HAMAP" id="MF_01014">
    <property type="entry name" value="HisA"/>
    <property type="match status" value="1"/>
</dbReference>
<dbReference type="InterPro" id="IPR013785">
    <property type="entry name" value="Aldolase_TIM"/>
</dbReference>
<dbReference type="InterPro" id="IPR006062">
    <property type="entry name" value="His_biosynth"/>
</dbReference>
<dbReference type="InterPro" id="IPR006063">
    <property type="entry name" value="HisA_bact_arch"/>
</dbReference>
<dbReference type="InterPro" id="IPR044524">
    <property type="entry name" value="Isoase_HisA-like"/>
</dbReference>
<dbReference type="InterPro" id="IPR023016">
    <property type="entry name" value="Isoase_HisA-like_bact"/>
</dbReference>
<dbReference type="InterPro" id="IPR011060">
    <property type="entry name" value="RibuloseP-bd_barrel"/>
</dbReference>
<dbReference type="NCBIfam" id="TIGR00007">
    <property type="entry name" value="1-(5-phosphoribosyl)-5-[(5-phosphoribosylamino)methylideneamino]imidazole-4-carboxamide isomerase"/>
    <property type="match status" value="1"/>
</dbReference>
<dbReference type="NCBIfam" id="NF010112">
    <property type="entry name" value="PRK13585.1"/>
    <property type="match status" value="1"/>
</dbReference>
<dbReference type="PANTHER" id="PTHR43090">
    <property type="entry name" value="1-(5-PHOSPHORIBOSYL)-5-[(5-PHOSPHORIBOSYLAMINO)METHYLIDENEAMINO] IMIDAZOLE-4-CARBOXAMIDE ISOMERASE"/>
    <property type="match status" value="1"/>
</dbReference>
<dbReference type="PANTHER" id="PTHR43090:SF2">
    <property type="entry name" value="1-(5-PHOSPHORIBOSYL)-5-[(5-PHOSPHORIBOSYLAMINO)METHYLIDENEAMINO] IMIDAZOLE-4-CARBOXAMIDE ISOMERASE"/>
    <property type="match status" value="1"/>
</dbReference>
<dbReference type="Pfam" id="PF00977">
    <property type="entry name" value="His_biosynth"/>
    <property type="match status" value="1"/>
</dbReference>
<dbReference type="SUPFAM" id="SSF51366">
    <property type="entry name" value="Ribulose-phoshate binding barrel"/>
    <property type="match status" value="1"/>
</dbReference>
<protein>
    <recommendedName>
        <fullName evidence="1">1-(5-phosphoribosyl)-5-[(5-phosphoribosylamino)methylideneamino] imidazole-4-carboxamide isomerase</fullName>
        <ecNumber evidence="1">5.3.1.16</ecNumber>
    </recommendedName>
    <alternativeName>
        <fullName evidence="1">Phosphoribosylformimino-5-aminoimidazole carboxamide ribotide isomerase</fullName>
    </alternativeName>
</protein>
<sequence>MLIIPAIDLKDGHCVRLKQGLMEDATVFSEDPGAMARHWVDQGGKRLHLVDLNGAFAGKPVNEGAIKAIVKAVGNDIPIQLGGGIRDLDTIERYLDDGISYVIVGTAAVKSPGFLHEACYAFPGQIMVGLDAKDGKVAVDGWSKLTGHDVIDLAKKFEDYGVEAVVYTDIGRDGMLTGVNIEATVALAQALTIPVIASGGVTNLDDVRRLAEVESEGIIGAITGRAIYEGTLNFTEAQALADELSQI</sequence>
<keyword id="KW-0028">Amino-acid biosynthesis</keyword>
<keyword id="KW-0963">Cytoplasm</keyword>
<keyword id="KW-0368">Histidine biosynthesis</keyword>
<keyword id="KW-0413">Isomerase</keyword>
<keyword id="KW-1185">Reference proteome</keyword>
<gene>
    <name evidence="1" type="primary">hisA</name>
    <name type="ordered locus">Mfla_0253</name>
</gene>
<name>HIS4_METFK</name>
<feature type="chain" id="PRO_0000290496" description="1-(5-phosphoribosyl)-5-[(5-phosphoribosylamino)methylideneamino] imidazole-4-carboxamide isomerase">
    <location>
        <begin position="1"/>
        <end position="247"/>
    </location>
</feature>
<feature type="active site" description="Proton acceptor" evidence="1">
    <location>
        <position position="8"/>
    </location>
</feature>
<feature type="active site" description="Proton donor" evidence="1">
    <location>
        <position position="131"/>
    </location>
</feature>
<organism>
    <name type="scientific">Methylobacillus flagellatus (strain ATCC 51484 / DSM 6875 / VKM B-1610 / KT)</name>
    <dbReference type="NCBI Taxonomy" id="265072"/>
    <lineage>
        <taxon>Bacteria</taxon>
        <taxon>Pseudomonadati</taxon>
        <taxon>Pseudomonadota</taxon>
        <taxon>Betaproteobacteria</taxon>
        <taxon>Nitrosomonadales</taxon>
        <taxon>Methylophilaceae</taxon>
        <taxon>Methylobacillus</taxon>
    </lineage>
</organism>
<reference key="1">
    <citation type="submission" date="2006-03" db="EMBL/GenBank/DDBJ databases">
        <title>Complete sequence of Methylobacillus flagellatus KT.</title>
        <authorList>
            <consortium name="US DOE Joint Genome Institute"/>
            <person name="Copeland A."/>
            <person name="Lucas S."/>
            <person name="Lapidus A."/>
            <person name="Barry K."/>
            <person name="Detter J.C."/>
            <person name="Glavina del Rio T."/>
            <person name="Hammon N."/>
            <person name="Israni S."/>
            <person name="Dalin E."/>
            <person name="Tice H."/>
            <person name="Pitluck S."/>
            <person name="Brettin T."/>
            <person name="Bruce D."/>
            <person name="Han C."/>
            <person name="Tapia R."/>
            <person name="Saunders E."/>
            <person name="Gilna P."/>
            <person name="Schmutz J."/>
            <person name="Larimer F."/>
            <person name="Land M."/>
            <person name="Kyrpides N."/>
            <person name="Anderson I."/>
            <person name="Richardson P."/>
        </authorList>
    </citation>
    <scope>NUCLEOTIDE SEQUENCE [LARGE SCALE GENOMIC DNA]</scope>
    <source>
        <strain>ATCC 51484 / DSM 6875 / VKM B-1610 / KT</strain>
    </source>
</reference>